<evidence type="ECO:0000250" key="1"/>
<evidence type="ECO:0000250" key="2">
    <source>
        <dbReference type="UniProtKB" id="P01236"/>
    </source>
</evidence>
<evidence type="ECO:0000250" key="3">
    <source>
        <dbReference type="UniProtKB" id="P01239"/>
    </source>
</evidence>
<evidence type="ECO:0000305" key="4"/>
<reference key="1">
    <citation type="journal article" date="1985" name="J. Biol. Chem.">
        <title>Nucleotide sequence of mouse prolactin and growth hormone mRNAs and expression of these mRNAs during pregnancy.</title>
        <authorList>
            <person name="Linzer D.I.H."/>
            <person name="Talamantes F."/>
        </authorList>
    </citation>
    <scope>NUCLEOTIDE SEQUENCE [MRNA]</scope>
    <source>
        <strain>BALB/cJ</strain>
    </source>
</reference>
<reference key="2">
    <citation type="journal article" date="1986" name="Biochim. Biophys. Acta">
        <title>Cloning and sequence analysis of cDNA for mouse prolactin.</title>
        <authorList>
            <person name="Harigaya T."/>
            <person name="Nakayama K."/>
            <person name="Ohkubo H."/>
            <person name="Nakanishi S."/>
            <person name="Seo H."/>
            <person name="Hoshino K."/>
        </authorList>
    </citation>
    <scope>NUCLEOTIDE SEQUENCE [MRNA]</scope>
</reference>
<reference key="3">
    <citation type="journal article" date="2005" name="Science">
        <title>The transcriptional landscape of the mammalian genome.</title>
        <authorList>
            <person name="Carninci P."/>
            <person name="Kasukawa T."/>
            <person name="Katayama S."/>
            <person name="Gough J."/>
            <person name="Frith M.C."/>
            <person name="Maeda N."/>
            <person name="Oyama R."/>
            <person name="Ravasi T."/>
            <person name="Lenhard B."/>
            <person name="Wells C."/>
            <person name="Kodzius R."/>
            <person name="Shimokawa K."/>
            <person name="Bajic V.B."/>
            <person name="Brenner S.E."/>
            <person name="Batalov S."/>
            <person name="Forrest A.R."/>
            <person name="Zavolan M."/>
            <person name="Davis M.J."/>
            <person name="Wilming L.G."/>
            <person name="Aidinis V."/>
            <person name="Allen J.E."/>
            <person name="Ambesi-Impiombato A."/>
            <person name="Apweiler R."/>
            <person name="Aturaliya R.N."/>
            <person name="Bailey T.L."/>
            <person name="Bansal M."/>
            <person name="Baxter L."/>
            <person name="Beisel K.W."/>
            <person name="Bersano T."/>
            <person name="Bono H."/>
            <person name="Chalk A.M."/>
            <person name="Chiu K.P."/>
            <person name="Choudhary V."/>
            <person name="Christoffels A."/>
            <person name="Clutterbuck D.R."/>
            <person name="Crowe M.L."/>
            <person name="Dalla E."/>
            <person name="Dalrymple B.P."/>
            <person name="de Bono B."/>
            <person name="Della Gatta G."/>
            <person name="di Bernardo D."/>
            <person name="Down T."/>
            <person name="Engstrom P."/>
            <person name="Fagiolini M."/>
            <person name="Faulkner G."/>
            <person name="Fletcher C.F."/>
            <person name="Fukushima T."/>
            <person name="Furuno M."/>
            <person name="Futaki S."/>
            <person name="Gariboldi M."/>
            <person name="Georgii-Hemming P."/>
            <person name="Gingeras T.R."/>
            <person name="Gojobori T."/>
            <person name="Green R.E."/>
            <person name="Gustincich S."/>
            <person name="Harbers M."/>
            <person name="Hayashi Y."/>
            <person name="Hensch T.K."/>
            <person name="Hirokawa N."/>
            <person name="Hill D."/>
            <person name="Huminiecki L."/>
            <person name="Iacono M."/>
            <person name="Ikeo K."/>
            <person name="Iwama A."/>
            <person name="Ishikawa T."/>
            <person name="Jakt M."/>
            <person name="Kanapin A."/>
            <person name="Katoh M."/>
            <person name="Kawasawa Y."/>
            <person name="Kelso J."/>
            <person name="Kitamura H."/>
            <person name="Kitano H."/>
            <person name="Kollias G."/>
            <person name="Krishnan S.P."/>
            <person name="Kruger A."/>
            <person name="Kummerfeld S.K."/>
            <person name="Kurochkin I.V."/>
            <person name="Lareau L.F."/>
            <person name="Lazarevic D."/>
            <person name="Lipovich L."/>
            <person name="Liu J."/>
            <person name="Liuni S."/>
            <person name="McWilliam S."/>
            <person name="Madan Babu M."/>
            <person name="Madera M."/>
            <person name="Marchionni L."/>
            <person name="Matsuda H."/>
            <person name="Matsuzawa S."/>
            <person name="Miki H."/>
            <person name="Mignone F."/>
            <person name="Miyake S."/>
            <person name="Morris K."/>
            <person name="Mottagui-Tabar S."/>
            <person name="Mulder N."/>
            <person name="Nakano N."/>
            <person name="Nakauchi H."/>
            <person name="Ng P."/>
            <person name="Nilsson R."/>
            <person name="Nishiguchi S."/>
            <person name="Nishikawa S."/>
            <person name="Nori F."/>
            <person name="Ohara O."/>
            <person name="Okazaki Y."/>
            <person name="Orlando V."/>
            <person name="Pang K.C."/>
            <person name="Pavan W.J."/>
            <person name="Pavesi G."/>
            <person name="Pesole G."/>
            <person name="Petrovsky N."/>
            <person name="Piazza S."/>
            <person name="Reed J."/>
            <person name="Reid J.F."/>
            <person name="Ring B.Z."/>
            <person name="Ringwald M."/>
            <person name="Rost B."/>
            <person name="Ruan Y."/>
            <person name="Salzberg S.L."/>
            <person name="Sandelin A."/>
            <person name="Schneider C."/>
            <person name="Schoenbach C."/>
            <person name="Sekiguchi K."/>
            <person name="Semple C.A."/>
            <person name="Seno S."/>
            <person name="Sessa L."/>
            <person name="Sheng Y."/>
            <person name="Shibata Y."/>
            <person name="Shimada H."/>
            <person name="Shimada K."/>
            <person name="Silva D."/>
            <person name="Sinclair B."/>
            <person name="Sperling S."/>
            <person name="Stupka E."/>
            <person name="Sugiura K."/>
            <person name="Sultana R."/>
            <person name="Takenaka Y."/>
            <person name="Taki K."/>
            <person name="Tammoja K."/>
            <person name="Tan S.L."/>
            <person name="Tang S."/>
            <person name="Taylor M.S."/>
            <person name="Tegner J."/>
            <person name="Teichmann S.A."/>
            <person name="Ueda H.R."/>
            <person name="van Nimwegen E."/>
            <person name="Verardo R."/>
            <person name="Wei C.L."/>
            <person name="Yagi K."/>
            <person name="Yamanishi H."/>
            <person name="Zabarovsky E."/>
            <person name="Zhu S."/>
            <person name="Zimmer A."/>
            <person name="Hide W."/>
            <person name="Bult C."/>
            <person name="Grimmond S.M."/>
            <person name="Teasdale R.D."/>
            <person name="Liu E.T."/>
            <person name="Brusic V."/>
            <person name="Quackenbush J."/>
            <person name="Wahlestedt C."/>
            <person name="Mattick J.S."/>
            <person name="Hume D.A."/>
            <person name="Kai C."/>
            <person name="Sasaki D."/>
            <person name="Tomaru Y."/>
            <person name="Fukuda S."/>
            <person name="Kanamori-Katayama M."/>
            <person name="Suzuki M."/>
            <person name="Aoki J."/>
            <person name="Arakawa T."/>
            <person name="Iida J."/>
            <person name="Imamura K."/>
            <person name="Itoh M."/>
            <person name="Kato T."/>
            <person name="Kawaji H."/>
            <person name="Kawagashira N."/>
            <person name="Kawashima T."/>
            <person name="Kojima M."/>
            <person name="Kondo S."/>
            <person name="Konno H."/>
            <person name="Nakano K."/>
            <person name="Ninomiya N."/>
            <person name="Nishio T."/>
            <person name="Okada M."/>
            <person name="Plessy C."/>
            <person name="Shibata K."/>
            <person name="Shiraki T."/>
            <person name="Suzuki S."/>
            <person name="Tagami M."/>
            <person name="Waki K."/>
            <person name="Watahiki A."/>
            <person name="Okamura-Oho Y."/>
            <person name="Suzuki H."/>
            <person name="Kawai J."/>
            <person name="Hayashizaki Y."/>
        </authorList>
    </citation>
    <scope>NUCLEOTIDE SEQUENCE [LARGE SCALE MRNA]</scope>
    <source>
        <strain>C57BL/6J</strain>
    </source>
</reference>
<proteinExistence type="evidence at transcript level"/>
<organism>
    <name type="scientific">Mus musculus</name>
    <name type="common">Mouse</name>
    <dbReference type="NCBI Taxonomy" id="10090"/>
    <lineage>
        <taxon>Eukaryota</taxon>
        <taxon>Metazoa</taxon>
        <taxon>Chordata</taxon>
        <taxon>Craniata</taxon>
        <taxon>Vertebrata</taxon>
        <taxon>Euteleostomi</taxon>
        <taxon>Mammalia</taxon>
        <taxon>Eutheria</taxon>
        <taxon>Euarchontoglires</taxon>
        <taxon>Glires</taxon>
        <taxon>Rodentia</taxon>
        <taxon>Myomorpha</taxon>
        <taxon>Muroidea</taxon>
        <taxon>Muridae</taxon>
        <taxon>Murinae</taxon>
        <taxon>Mus</taxon>
        <taxon>Mus</taxon>
    </lineage>
</organism>
<sequence>MNSQGSAQKAGTLLLLLISNLLFCQNVQPLPICSAGDCQTSLRELFDRVVILSHYIHTLYTDMFIEFDKQYVQDREFMVKVINDCPTSSLATPEDKEQALKVPPEVLLNLILSLVQSSSDPLFQLITGVGGIQEAPEYILSRAKEIEEQNKQLLEGVEKIISQAYPEAKGNGIYFVWSQLPSLQGVDEESKILSLRNTIRCLRRDSHKVDNFLKVLRCQIAHQNNC</sequence>
<dbReference type="EMBL" id="X02892">
    <property type="protein sequence ID" value="CAA26651.1"/>
    <property type="molecule type" value="mRNA"/>
</dbReference>
<dbReference type="EMBL" id="X04418">
    <property type="protein sequence ID" value="CAA28018.1"/>
    <property type="molecule type" value="mRNA"/>
</dbReference>
<dbReference type="EMBL" id="AK017521">
    <property type="protein sequence ID" value="BAB30787.2"/>
    <property type="molecule type" value="mRNA"/>
</dbReference>
<dbReference type="EMBL" id="AK017579">
    <property type="protein sequence ID" value="BAB30816.2"/>
    <property type="molecule type" value="mRNA"/>
</dbReference>
<dbReference type="SMR" id="P06879"/>
<dbReference type="FunCoup" id="P06879">
    <property type="interactions" value="1108"/>
</dbReference>
<dbReference type="STRING" id="10090.ENSMUSP00000105998"/>
<dbReference type="iPTMnet" id="P06879"/>
<dbReference type="PhosphoSitePlus" id="P06879"/>
<dbReference type="PaxDb" id="10090-ENSMUSP00000105998"/>
<dbReference type="PeptideAtlas" id="P06879"/>
<dbReference type="ProteomicsDB" id="291741"/>
<dbReference type="Ensembl" id="ENSMUST00000224228.2">
    <property type="protein sequence ID" value="ENSMUSP00000153245.2"/>
    <property type="gene ID" value="ENSMUSG00000021342.15"/>
</dbReference>
<dbReference type="AGR" id="MGI:97762"/>
<dbReference type="MGI" id="MGI:97762">
    <property type="gene designation" value="Prl"/>
</dbReference>
<dbReference type="VEuPathDB" id="HostDB:ENSMUSG00000021342"/>
<dbReference type="eggNOG" id="ENOG502QYU3">
    <property type="taxonomic scope" value="Eukaryota"/>
</dbReference>
<dbReference type="GeneTree" id="ENSGT00950000182818"/>
<dbReference type="InParanoid" id="P06879"/>
<dbReference type="Reactome" id="R-MMU-1170546">
    <property type="pathway name" value="Prolactin receptor signaling"/>
</dbReference>
<dbReference type="Reactome" id="R-MMU-982772">
    <property type="pathway name" value="Growth hormone receptor signaling"/>
</dbReference>
<dbReference type="ChiTaRS" id="Prl">
    <property type="organism name" value="mouse"/>
</dbReference>
<dbReference type="PRO" id="PR:P06879"/>
<dbReference type="Proteomes" id="UP000000589">
    <property type="component" value="Chromosome 13"/>
</dbReference>
<dbReference type="RNAct" id="P06879">
    <property type="molecule type" value="protein"/>
</dbReference>
<dbReference type="Bgee" id="ENSMUSG00000021342">
    <property type="expression patterns" value="Expressed in pituitary gland and 26 other cell types or tissues"/>
</dbReference>
<dbReference type="ExpressionAtlas" id="P06879">
    <property type="expression patterns" value="baseline and differential"/>
</dbReference>
<dbReference type="GO" id="GO:0005576">
    <property type="term" value="C:extracellular region"/>
    <property type="evidence" value="ECO:0007669"/>
    <property type="project" value="UniProtKB-SubCell"/>
</dbReference>
<dbReference type="GO" id="GO:0030141">
    <property type="term" value="C:secretory granule"/>
    <property type="evidence" value="ECO:0000314"/>
    <property type="project" value="MGI"/>
</dbReference>
<dbReference type="GO" id="GO:0005179">
    <property type="term" value="F:hormone activity"/>
    <property type="evidence" value="ECO:0000304"/>
    <property type="project" value="MGI"/>
</dbReference>
<dbReference type="GO" id="GO:0005148">
    <property type="term" value="F:prolactin receptor binding"/>
    <property type="evidence" value="ECO:0000266"/>
    <property type="project" value="MGI"/>
</dbReference>
<dbReference type="GO" id="GO:0008283">
    <property type="term" value="P:cell population proliferation"/>
    <property type="evidence" value="ECO:0000316"/>
    <property type="project" value="MGI"/>
</dbReference>
<dbReference type="GO" id="GO:0050673">
    <property type="term" value="P:epithelial cell proliferation"/>
    <property type="evidence" value="ECO:0000316"/>
    <property type="project" value="MGI"/>
</dbReference>
<dbReference type="GO" id="GO:0007595">
    <property type="term" value="P:lactation"/>
    <property type="evidence" value="ECO:0007669"/>
    <property type="project" value="UniProtKB-KW"/>
</dbReference>
<dbReference type="GO" id="GO:0030879">
    <property type="term" value="P:mammary gland development"/>
    <property type="evidence" value="ECO:0000316"/>
    <property type="project" value="MGI"/>
</dbReference>
<dbReference type="GO" id="GO:0042711">
    <property type="term" value="P:maternal behavior"/>
    <property type="evidence" value="ECO:0000316"/>
    <property type="project" value="MGI"/>
</dbReference>
<dbReference type="GO" id="GO:0008284">
    <property type="term" value="P:positive regulation of cell population proliferation"/>
    <property type="evidence" value="ECO:0000316"/>
    <property type="project" value="MGI"/>
</dbReference>
<dbReference type="GO" id="GO:0050679">
    <property type="term" value="P:positive regulation of epithelial cell proliferation"/>
    <property type="evidence" value="ECO:0000316"/>
    <property type="project" value="MGI"/>
</dbReference>
<dbReference type="GO" id="GO:0046427">
    <property type="term" value="P:positive regulation of receptor signaling pathway via JAK-STAT"/>
    <property type="evidence" value="ECO:0000316"/>
    <property type="project" value="MGI"/>
</dbReference>
<dbReference type="GO" id="GO:0046425">
    <property type="term" value="P:regulation of receptor signaling pathway via JAK-STAT"/>
    <property type="evidence" value="ECO:0000314"/>
    <property type="project" value="MGI"/>
</dbReference>
<dbReference type="CDD" id="cd10288">
    <property type="entry name" value="prolactin_like"/>
    <property type="match status" value="1"/>
</dbReference>
<dbReference type="Gene3D" id="1.20.1250.10">
    <property type="match status" value="1"/>
</dbReference>
<dbReference type="InterPro" id="IPR009079">
    <property type="entry name" value="4_helix_cytokine-like_core"/>
</dbReference>
<dbReference type="InterPro" id="IPR001400">
    <property type="entry name" value="Somatotropin/Prolactin"/>
</dbReference>
<dbReference type="InterPro" id="IPR018116">
    <property type="entry name" value="Somatotropin_CS"/>
</dbReference>
<dbReference type="PANTHER" id="PTHR11417:SF5">
    <property type="entry name" value="PROLACTIN"/>
    <property type="match status" value="1"/>
</dbReference>
<dbReference type="PANTHER" id="PTHR11417">
    <property type="entry name" value="SOMATOTROPIN,PROLACTIN"/>
    <property type="match status" value="1"/>
</dbReference>
<dbReference type="Pfam" id="PF00103">
    <property type="entry name" value="Hormone_1"/>
    <property type="match status" value="1"/>
</dbReference>
<dbReference type="PRINTS" id="PR00836">
    <property type="entry name" value="SOMATOTROPIN"/>
</dbReference>
<dbReference type="SUPFAM" id="SSF47266">
    <property type="entry name" value="4-helical cytokines"/>
    <property type="match status" value="1"/>
</dbReference>
<dbReference type="PROSITE" id="PS00338">
    <property type="entry name" value="SOMATOTROPIN_2"/>
    <property type="match status" value="1"/>
</dbReference>
<comment type="function">
    <text>Prolactin acts primarily on the mammary gland by promoting lactation.</text>
</comment>
<comment type="subunit">
    <text evidence="2">Interacts with PRLR.</text>
</comment>
<comment type="subcellular location">
    <subcellularLocation>
        <location>Secreted</location>
    </subcellularLocation>
</comment>
<comment type="similarity">
    <text evidence="4">Belongs to the somatotropin/prolactin family.</text>
</comment>
<name>PRL_MOUSE</name>
<feature type="signal peptide">
    <location>
        <begin position="1"/>
        <end position="29"/>
    </location>
</feature>
<feature type="chain" id="PRO_0000032921" description="Prolactin">
    <location>
        <begin position="30"/>
        <end position="226"/>
    </location>
</feature>
<feature type="modified residue" description="Phosphoserine" evidence="3">
    <location>
        <position position="53"/>
    </location>
</feature>
<feature type="modified residue" description="Phosphoserine" evidence="3">
    <location>
        <position position="117"/>
    </location>
</feature>
<feature type="disulfide bond" evidence="1">
    <location>
        <begin position="33"/>
        <end position="38"/>
    </location>
</feature>
<feature type="disulfide bond" evidence="1">
    <location>
        <begin position="85"/>
        <end position="201"/>
    </location>
</feature>
<feature type="disulfide bond" evidence="1">
    <location>
        <begin position="218"/>
        <end position="226"/>
    </location>
</feature>
<feature type="sequence conflict" description="In Ref. 2; CAA28018." evidence="4" ref="2">
    <original>D</original>
    <variation>H</variation>
    <location>
        <position position="205"/>
    </location>
</feature>
<keyword id="KW-1015">Disulfide bond</keyword>
<keyword id="KW-0372">Hormone</keyword>
<keyword id="KW-0421">Lactation</keyword>
<keyword id="KW-0597">Phosphoprotein</keyword>
<keyword id="KW-1185">Reference proteome</keyword>
<keyword id="KW-0964">Secreted</keyword>
<keyword id="KW-0732">Signal</keyword>
<accession>P06879</accession>
<accession>Q544X8</accession>
<protein>
    <recommendedName>
        <fullName>Prolactin</fullName>
        <shortName>PRL</shortName>
    </recommendedName>
</protein>
<gene>
    <name type="primary">Prl</name>
</gene>